<accession>Q5R6D6</accession>
<gene>
    <name type="primary">ERMN</name>
</gene>
<proteinExistence type="evidence at transcript level"/>
<protein>
    <recommendedName>
        <fullName>Ermin</fullName>
    </recommendedName>
    <alternativeName>
        <fullName>Juxtanodin</fullName>
        <shortName>JN</shortName>
    </alternativeName>
</protein>
<dbReference type="EMBL" id="CR860555">
    <property type="protein sequence ID" value="CAH92680.1"/>
    <property type="molecule type" value="mRNA"/>
</dbReference>
<dbReference type="RefSeq" id="NP_001126570.1">
    <property type="nucleotide sequence ID" value="NM_001133098.1"/>
</dbReference>
<dbReference type="SMR" id="Q5R6D6"/>
<dbReference type="FunCoup" id="Q5R6D6">
    <property type="interactions" value="38"/>
</dbReference>
<dbReference type="STRING" id="9601.ENSPPYP00000014355"/>
<dbReference type="GeneID" id="100173561"/>
<dbReference type="KEGG" id="pon:100173561"/>
<dbReference type="CTD" id="57471"/>
<dbReference type="eggNOG" id="KOG2030">
    <property type="taxonomic scope" value="Eukaryota"/>
</dbReference>
<dbReference type="InParanoid" id="Q5R6D6"/>
<dbReference type="OrthoDB" id="9947518at2759"/>
<dbReference type="Proteomes" id="UP000001595">
    <property type="component" value="Unplaced"/>
</dbReference>
<dbReference type="GO" id="GO:0005938">
    <property type="term" value="C:cell cortex"/>
    <property type="evidence" value="ECO:0007669"/>
    <property type="project" value="TreeGrafter"/>
</dbReference>
<dbReference type="GO" id="GO:0005856">
    <property type="term" value="C:cytoskeleton"/>
    <property type="evidence" value="ECO:0007669"/>
    <property type="project" value="UniProtKB-SubCell"/>
</dbReference>
<dbReference type="GO" id="GO:0070062">
    <property type="term" value="C:extracellular exosome"/>
    <property type="evidence" value="ECO:0007669"/>
    <property type="project" value="TreeGrafter"/>
</dbReference>
<dbReference type="GO" id="GO:0030175">
    <property type="term" value="C:filopodium"/>
    <property type="evidence" value="ECO:0007669"/>
    <property type="project" value="TreeGrafter"/>
</dbReference>
<dbReference type="GO" id="GO:0033269">
    <property type="term" value="C:internode region of axon"/>
    <property type="evidence" value="ECO:0007669"/>
    <property type="project" value="TreeGrafter"/>
</dbReference>
<dbReference type="GO" id="GO:0043209">
    <property type="term" value="C:myelin sheath"/>
    <property type="evidence" value="ECO:0007669"/>
    <property type="project" value="TreeGrafter"/>
</dbReference>
<dbReference type="GO" id="GO:0043025">
    <property type="term" value="C:neuronal cell body"/>
    <property type="evidence" value="ECO:0007669"/>
    <property type="project" value="TreeGrafter"/>
</dbReference>
<dbReference type="GO" id="GO:0033270">
    <property type="term" value="C:paranode region of axon"/>
    <property type="evidence" value="ECO:0007669"/>
    <property type="project" value="TreeGrafter"/>
</dbReference>
<dbReference type="GO" id="GO:0051015">
    <property type="term" value="F:actin filament binding"/>
    <property type="evidence" value="ECO:0007669"/>
    <property type="project" value="InterPro"/>
</dbReference>
<dbReference type="GO" id="GO:0007015">
    <property type="term" value="P:actin filament organization"/>
    <property type="evidence" value="ECO:0007669"/>
    <property type="project" value="InterPro"/>
</dbReference>
<dbReference type="GO" id="GO:0001763">
    <property type="term" value="P:morphogenesis of a branching structure"/>
    <property type="evidence" value="ECO:0007669"/>
    <property type="project" value="TreeGrafter"/>
</dbReference>
<dbReference type="GO" id="GO:0031344">
    <property type="term" value="P:regulation of cell projection organization"/>
    <property type="evidence" value="ECO:0007669"/>
    <property type="project" value="TreeGrafter"/>
</dbReference>
<dbReference type="GO" id="GO:0008360">
    <property type="term" value="P:regulation of cell shape"/>
    <property type="evidence" value="ECO:0007669"/>
    <property type="project" value="InterPro"/>
</dbReference>
<dbReference type="Gene3D" id="6.10.360.10">
    <property type="match status" value="1"/>
</dbReference>
<dbReference type="InterPro" id="IPR045346">
    <property type="entry name" value="Ermin"/>
</dbReference>
<dbReference type="InterPro" id="IPR008954">
    <property type="entry name" value="Moesin_tail_sf"/>
</dbReference>
<dbReference type="PANTHER" id="PTHR47137">
    <property type="entry name" value="ERMIN"/>
    <property type="match status" value="1"/>
</dbReference>
<dbReference type="PANTHER" id="PTHR47137:SF1">
    <property type="entry name" value="ERMIN"/>
    <property type="match status" value="1"/>
</dbReference>
<dbReference type="Pfam" id="PF20491">
    <property type="entry name" value="Ermin"/>
    <property type="match status" value="1"/>
</dbReference>
<dbReference type="SUPFAM" id="SSF48678">
    <property type="entry name" value="Moesin tail domain"/>
    <property type="match status" value="1"/>
</dbReference>
<reference key="1">
    <citation type="submission" date="2004-11" db="EMBL/GenBank/DDBJ databases">
        <authorList>
            <consortium name="The German cDNA consortium"/>
        </authorList>
    </citation>
    <scope>NUCLEOTIDE SEQUENCE [LARGE SCALE MRNA]</scope>
    <source>
        <tissue>Brain cortex</tissue>
    </source>
</reference>
<name>ERMIN_PONAB</name>
<sequence length="284" mass="32765">MTDVPATFTQAECNGDKPPENGQQPITKISEELTDVDSPLPHYRVEPSLEGAPTKGSQEERRKLQGNMLLNSSMEEKILKENPEEKLFVVHKAITDLSLQETSADEMTFREGRQWEKIPLSGSNQEIRRQKERITEQPLKEEEDEDRKNKGHQAAEIEWLGFRKPSQADMLHSKHDEEQKVWDEEIDDDDDDNCNDDEDEVRVIEFKKKHEEVSQFKEEGDASEDSPLSSASSQAVTPDEQPTLGKKSDISRNAYSRYNTISYRKIRKGNTKQRIDEFESMMHL</sequence>
<organism>
    <name type="scientific">Pongo abelii</name>
    <name type="common">Sumatran orangutan</name>
    <name type="synonym">Pongo pygmaeus abelii</name>
    <dbReference type="NCBI Taxonomy" id="9601"/>
    <lineage>
        <taxon>Eukaryota</taxon>
        <taxon>Metazoa</taxon>
        <taxon>Chordata</taxon>
        <taxon>Craniata</taxon>
        <taxon>Vertebrata</taxon>
        <taxon>Euteleostomi</taxon>
        <taxon>Mammalia</taxon>
        <taxon>Eutheria</taxon>
        <taxon>Euarchontoglires</taxon>
        <taxon>Primates</taxon>
        <taxon>Haplorrhini</taxon>
        <taxon>Catarrhini</taxon>
        <taxon>Hominidae</taxon>
        <taxon>Pongo</taxon>
    </lineage>
</organism>
<evidence type="ECO:0000250" key="1"/>
<evidence type="ECO:0000250" key="2">
    <source>
        <dbReference type="UniProtKB" id="Q5EBJ4"/>
    </source>
</evidence>
<evidence type="ECO:0000250" key="3">
    <source>
        <dbReference type="UniProtKB" id="Q5RJL0"/>
    </source>
</evidence>
<evidence type="ECO:0000256" key="4">
    <source>
        <dbReference type="SAM" id="MobiDB-lite"/>
    </source>
</evidence>
<keyword id="KW-0009">Actin-binding</keyword>
<keyword id="KW-0963">Cytoplasm</keyword>
<keyword id="KW-0206">Cytoskeleton</keyword>
<keyword id="KW-0597">Phosphoprotein</keyword>
<keyword id="KW-1185">Reference proteome</keyword>
<feature type="chain" id="PRO_0000314750" description="Ermin">
    <location>
        <begin position="1"/>
        <end position="284"/>
    </location>
</feature>
<feature type="region of interest" description="Disordered" evidence="4">
    <location>
        <begin position="1"/>
        <end position="61"/>
    </location>
</feature>
<feature type="region of interest" description="Disordered" evidence="4">
    <location>
        <begin position="108"/>
        <end position="251"/>
    </location>
</feature>
<feature type="region of interest" description="Binds actin" evidence="1">
    <location>
        <begin position="265"/>
        <end position="284"/>
    </location>
</feature>
<feature type="compositionally biased region" description="Basic and acidic residues" evidence="4">
    <location>
        <begin position="126"/>
        <end position="140"/>
    </location>
</feature>
<feature type="compositionally biased region" description="Basic and acidic residues" evidence="4">
    <location>
        <begin position="171"/>
        <end position="183"/>
    </location>
</feature>
<feature type="compositionally biased region" description="Acidic residues" evidence="4">
    <location>
        <begin position="184"/>
        <end position="200"/>
    </location>
</feature>
<feature type="compositionally biased region" description="Basic and acidic residues" evidence="4">
    <location>
        <begin position="201"/>
        <end position="220"/>
    </location>
</feature>
<feature type="compositionally biased region" description="Low complexity" evidence="4">
    <location>
        <begin position="225"/>
        <end position="235"/>
    </location>
</feature>
<feature type="modified residue" description="Phosphoserine" evidence="3">
    <location>
        <position position="73"/>
    </location>
</feature>
<feature type="modified residue" description="Phosphoserine" evidence="2">
    <location>
        <position position="214"/>
    </location>
</feature>
<feature type="modified residue" description="Phosphoserine" evidence="2">
    <location>
        <position position="226"/>
    </location>
</feature>
<feature type="modified residue" description="Phosphoserine" evidence="2">
    <location>
        <position position="230"/>
    </location>
</feature>
<feature type="modified residue" description="Phosphoserine" evidence="2">
    <location>
        <position position="233"/>
    </location>
</feature>
<feature type="modified residue" description="Phosphothreonine" evidence="2">
    <location>
        <position position="237"/>
    </location>
</feature>
<comment type="function">
    <text evidence="1">Plays a role in cytoskeletal rearrangements during the late wrapping and/or compaction phases of myelinogenesis as well as in maintenance and stability of myelin sheath in the adult. May play an important role in late-stage oligodendroglia maturation, myelin/Ranvier node formation during CNS development, and in the maintenance and plasticity of related structures in the mature CNS (By similarity).</text>
</comment>
<comment type="subunit">
    <text evidence="1">Binds actin.</text>
</comment>
<comment type="subcellular location">
    <subcellularLocation>
        <location evidence="1">Cytoplasm</location>
        <location evidence="1">Cytoskeleton</location>
    </subcellularLocation>
</comment>